<protein>
    <recommendedName>
        <fullName>Protein FMP52, mitochondrial</fullName>
    </recommendedName>
    <alternativeName>
        <fullName>Found in mitochondrial proteome protein 52</fullName>
    </alternativeName>
</protein>
<sequence>MNGLVLGATGLCGGGFLRHAQEAPQFSKVYAILRRELPFPATDKVVAIVERDNSKWSQLITNEMNPQVLFTALATTRAAAGGLDKQYKIDHDLNLQLAQAAKEKGCETIVLVSSAGAHPDSRFGYMKMKGEIERDVIALDFKHIIILRPGPLLGERTNSKQSGFGGNLTAALGTRVYRSRFQRLLGYPVYGDEVGKVGVHLALNTSGKDKVQFVSSKDILDISASLEKIAT</sequence>
<comment type="subcellular location">
    <subcellularLocation>
        <location evidence="2 3">Mitochondrion outer membrane</location>
        <topology evidence="2 3">Peripheral membrane protein</topology>
    </subcellularLocation>
</comment>
<comment type="miscellaneous">
    <text evidence="1">Present with 1340 molecules/cell in log phase SD medium.</text>
</comment>
<comment type="similarity">
    <text evidence="4">Belongs to the FMP52 family.</text>
</comment>
<reference key="1">
    <citation type="journal article" date="1997" name="Nature">
        <title>The nucleotide sequence of Saccharomyces cerevisiae chromosome V.</title>
        <authorList>
            <person name="Dietrich F.S."/>
            <person name="Mulligan J.T."/>
            <person name="Hennessy K.M."/>
            <person name="Yelton M.A."/>
            <person name="Allen E."/>
            <person name="Araujo R."/>
            <person name="Aviles E."/>
            <person name="Berno A."/>
            <person name="Brennan T."/>
            <person name="Carpenter J."/>
            <person name="Chen E."/>
            <person name="Cherry J.M."/>
            <person name="Chung E."/>
            <person name="Duncan M."/>
            <person name="Guzman E."/>
            <person name="Hartzell G."/>
            <person name="Hunicke-Smith S."/>
            <person name="Hyman R.W."/>
            <person name="Kayser A."/>
            <person name="Komp C."/>
            <person name="Lashkari D."/>
            <person name="Lew H."/>
            <person name="Lin D."/>
            <person name="Mosedale D."/>
            <person name="Nakahara K."/>
            <person name="Namath A."/>
            <person name="Norgren R."/>
            <person name="Oefner P."/>
            <person name="Oh C."/>
            <person name="Petel F.X."/>
            <person name="Roberts D."/>
            <person name="Sehl P."/>
            <person name="Schramm S."/>
            <person name="Shogren T."/>
            <person name="Smith V."/>
            <person name="Taylor P."/>
            <person name="Wei Y."/>
            <person name="Botstein D."/>
            <person name="Davis R.W."/>
        </authorList>
    </citation>
    <scope>NUCLEOTIDE SEQUENCE [LARGE SCALE GENOMIC DNA]</scope>
    <source>
        <strain>ATCC 204508 / S288c</strain>
    </source>
</reference>
<reference key="2">
    <citation type="journal article" date="2014" name="G3 (Bethesda)">
        <title>The reference genome sequence of Saccharomyces cerevisiae: Then and now.</title>
        <authorList>
            <person name="Engel S.R."/>
            <person name="Dietrich F.S."/>
            <person name="Fisk D.G."/>
            <person name="Binkley G."/>
            <person name="Balakrishnan R."/>
            <person name="Costanzo M.C."/>
            <person name="Dwight S.S."/>
            <person name="Hitz B.C."/>
            <person name="Karra K."/>
            <person name="Nash R.S."/>
            <person name="Weng S."/>
            <person name="Wong E.D."/>
            <person name="Lloyd P."/>
            <person name="Skrzypek M.S."/>
            <person name="Miyasato S.R."/>
            <person name="Simison M."/>
            <person name="Cherry J.M."/>
        </authorList>
    </citation>
    <scope>GENOME REANNOTATION</scope>
    <source>
        <strain>ATCC 204508 / S288c</strain>
    </source>
</reference>
<reference key="3">
    <citation type="journal article" date="2007" name="Genome Res.">
        <title>Approaching a complete repository of sequence-verified protein-encoding clones for Saccharomyces cerevisiae.</title>
        <authorList>
            <person name="Hu Y."/>
            <person name="Rolfs A."/>
            <person name="Bhullar B."/>
            <person name="Murthy T.V.S."/>
            <person name="Zhu C."/>
            <person name="Berger M.F."/>
            <person name="Camargo A.A."/>
            <person name="Kelley F."/>
            <person name="McCarron S."/>
            <person name="Jepson D."/>
            <person name="Richardson A."/>
            <person name="Raphael J."/>
            <person name="Moreira D."/>
            <person name="Taycher E."/>
            <person name="Zuo D."/>
            <person name="Mohr S."/>
            <person name="Kane M.F."/>
            <person name="Williamson J."/>
            <person name="Simpson A.J.G."/>
            <person name="Bulyk M.L."/>
            <person name="Harlow E."/>
            <person name="Marsischky G."/>
            <person name="Kolodner R.D."/>
            <person name="LaBaer J."/>
        </authorList>
    </citation>
    <scope>NUCLEOTIDE SEQUENCE [GENOMIC DNA]</scope>
    <source>
        <strain>ATCC 204508 / S288c</strain>
    </source>
</reference>
<reference key="4">
    <citation type="journal article" date="2003" name="Nature">
        <title>Global analysis of protein expression in yeast.</title>
        <authorList>
            <person name="Ghaemmaghami S."/>
            <person name="Huh W.-K."/>
            <person name="Bower K."/>
            <person name="Howson R.W."/>
            <person name="Belle A."/>
            <person name="Dephoure N."/>
            <person name="O'Shea E.K."/>
            <person name="Weissman J.S."/>
        </authorList>
    </citation>
    <scope>LEVEL OF PROTEIN EXPRESSION [LARGE SCALE ANALYSIS]</scope>
</reference>
<reference key="5">
    <citation type="journal article" date="2003" name="Proc. Natl. Acad. Sci. U.S.A.">
        <title>The proteome of Saccharomyces cerevisiae mitochondria.</title>
        <authorList>
            <person name="Sickmann A."/>
            <person name="Reinders J."/>
            <person name="Wagner Y."/>
            <person name="Joppich C."/>
            <person name="Zahedi R.P."/>
            <person name="Meyer H.E."/>
            <person name="Schoenfisch B."/>
            <person name="Perschil I."/>
            <person name="Chacinska A."/>
            <person name="Guiard B."/>
            <person name="Rehling P."/>
            <person name="Pfanner N."/>
            <person name="Meisinger C."/>
        </authorList>
    </citation>
    <scope>SUBCELLULAR LOCATION [LARGE SCALE ANALYSIS]</scope>
    <source>
        <strain>ATCC 76625 / YPH499</strain>
    </source>
</reference>
<reference key="6">
    <citation type="journal article" date="2006" name="Mol. Biol. Cell">
        <title>Proteomic analysis of the yeast mitochondrial outer membrane reveals accumulation of a subclass of preproteins.</title>
        <authorList>
            <person name="Zahedi R.P."/>
            <person name="Sickmann A."/>
            <person name="Boehm A.M."/>
            <person name="Winkler C."/>
            <person name="Zufall N."/>
            <person name="Schoenfisch B."/>
            <person name="Guiard B."/>
            <person name="Pfanner N."/>
            <person name="Meisinger C."/>
        </authorList>
    </citation>
    <scope>SUBCELLULAR LOCATION</scope>
    <scope>IDENTIFICATION BY MASS SPECTROMETRY</scope>
</reference>
<reference key="7">
    <citation type="journal article" date="2012" name="Proc. Natl. Acad. Sci. U.S.A.">
        <title>N-terminal acetylome analyses and functional insights of the N-terminal acetyltransferase NatB.</title>
        <authorList>
            <person name="Van Damme P."/>
            <person name="Lasa M."/>
            <person name="Polevoda B."/>
            <person name="Gazquez C."/>
            <person name="Elosegui-Artola A."/>
            <person name="Kim D.S."/>
            <person name="De Juan-Pardo E."/>
            <person name="Demeyer K."/>
            <person name="Hole K."/>
            <person name="Larrea E."/>
            <person name="Timmerman E."/>
            <person name="Prieto J."/>
            <person name="Arnesen T."/>
            <person name="Sherman F."/>
            <person name="Gevaert K."/>
            <person name="Aldabe R."/>
        </authorList>
    </citation>
    <scope>IDENTIFICATION BY MASS SPECTROMETRY [LARGE SCALE ANALYSIS]</scope>
</reference>
<accession>P40008</accession>
<accession>D3DLQ0</accession>
<keyword id="KW-0472">Membrane</keyword>
<keyword id="KW-0496">Mitochondrion</keyword>
<keyword id="KW-1000">Mitochondrion outer membrane</keyword>
<keyword id="KW-1185">Reference proteome</keyword>
<keyword id="KW-0809">Transit peptide</keyword>
<dbReference type="EMBL" id="U18778">
    <property type="protein sequence ID" value="AAB64537.1"/>
    <property type="molecule type" value="Genomic_DNA"/>
</dbReference>
<dbReference type="EMBL" id="AY558449">
    <property type="protein sequence ID" value="AAS56775.1"/>
    <property type="molecule type" value="Genomic_DNA"/>
</dbReference>
<dbReference type="EMBL" id="BK006939">
    <property type="protein sequence ID" value="DAA07654.1"/>
    <property type="molecule type" value="Genomic_DNA"/>
</dbReference>
<dbReference type="PIR" id="S50462">
    <property type="entry name" value="S50462"/>
</dbReference>
<dbReference type="RefSeq" id="NP_010919.1">
    <property type="nucleotide sequence ID" value="NM_001178895.1"/>
</dbReference>
<dbReference type="SMR" id="P40008"/>
<dbReference type="BioGRID" id="36734">
    <property type="interactions" value="82"/>
</dbReference>
<dbReference type="DIP" id="DIP-5295N"/>
<dbReference type="FunCoup" id="P40008">
    <property type="interactions" value="128"/>
</dbReference>
<dbReference type="IntAct" id="P40008">
    <property type="interactions" value="3"/>
</dbReference>
<dbReference type="MINT" id="P40008"/>
<dbReference type="STRING" id="4932.YER004W"/>
<dbReference type="iPTMnet" id="P40008"/>
<dbReference type="PaxDb" id="4932-YER004W"/>
<dbReference type="PeptideAtlas" id="P40008"/>
<dbReference type="EnsemblFungi" id="YER004W_mRNA">
    <property type="protein sequence ID" value="YER004W"/>
    <property type="gene ID" value="YER004W"/>
</dbReference>
<dbReference type="GeneID" id="856721"/>
<dbReference type="KEGG" id="sce:YER004W"/>
<dbReference type="AGR" id="SGD:S000000806"/>
<dbReference type="SGD" id="S000000806">
    <property type="gene designation" value="FMP52"/>
</dbReference>
<dbReference type="VEuPathDB" id="FungiDB:YER004W"/>
<dbReference type="eggNOG" id="KOG4039">
    <property type="taxonomic scope" value="Eukaryota"/>
</dbReference>
<dbReference type="GeneTree" id="ENSGT00390000008184"/>
<dbReference type="HOGENOM" id="CLU_071330_2_2_1"/>
<dbReference type="InParanoid" id="P40008"/>
<dbReference type="OMA" id="CIENAKA"/>
<dbReference type="OrthoDB" id="430436at2759"/>
<dbReference type="BioCyc" id="YEAST:G3O-30191-MONOMER"/>
<dbReference type="BioGRID-ORCS" id="856721">
    <property type="hits" value="3 hits in 10 CRISPR screens"/>
</dbReference>
<dbReference type="PRO" id="PR:P40008"/>
<dbReference type="Proteomes" id="UP000002311">
    <property type="component" value="Chromosome V"/>
</dbReference>
<dbReference type="RNAct" id="P40008">
    <property type="molecule type" value="protein"/>
</dbReference>
<dbReference type="GO" id="GO:0005737">
    <property type="term" value="C:cytoplasm"/>
    <property type="evidence" value="ECO:0000318"/>
    <property type="project" value="GO_Central"/>
</dbReference>
<dbReference type="GO" id="GO:0005783">
    <property type="term" value="C:endoplasmic reticulum"/>
    <property type="evidence" value="ECO:0007005"/>
    <property type="project" value="SGD"/>
</dbReference>
<dbReference type="GO" id="GO:0005741">
    <property type="term" value="C:mitochondrial outer membrane"/>
    <property type="evidence" value="ECO:0007005"/>
    <property type="project" value="SGD"/>
</dbReference>
<dbReference type="GO" id="GO:0005739">
    <property type="term" value="C:mitochondrion"/>
    <property type="evidence" value="ECO:0007005"/>
    <property type="project" value="SGD"/>
</dbReference>
<dbReference type="GO" id="GO:0051170">
    <property type="term" value="P:import into nucleus"/>
    <property type="evidence" value="ECO:0000318"/>
    <property type="project" value="GO_Central"/>
</dbReference>
<dbReference type="CDD" id="cd05250">
    <property type="entry name" value="CC3_like_SDR_a"/>
    <property type="match status" value="1"/>
</dbReference>
<dbReference type="FunFam" id="3.40.50.720:FF:000366">
    <property type="entry name" value="Protein FMP52, mitochondrial"/>
    <property type="match status" value="1"/>
</dbReference>
<dbReference type="Gene3D" id="3.40.50.720">
    <property type="entry name" value="NAD(P)-binding Rossmann-like Domain"/>
    <property type="match status" value="1"/>
</dbReference>
<dbReference type="InterPro" id="IPR014843">
    <property type="entry name" value="Him1/Fmp52"/>
</dbReference>
<dbReference type="InterPro" id="IPR036291">
    <property type="entry name" value="NAD(P)-bd_dom_sf"/>
</dbReference>
<dbReference type="PANTHER" id="PTHR14097">
    <property type="entry name" value="OXIDOREDUCTASE HTATIP2"/>
    <property type="match status" value="1"/>
</dbReference>
<dbReference type="PANTHER" id="PTHR14097:SF7">
    <property type="entry name" value="OXIDOREDUCTASE HTATIP2"/>
    <property type="match status" value="1"/>
</dbReference>
<dbReference type="Pfam" id="PF08732">
    <property type="entry name" value="HIM1"/>
    <property type="match status" value="1"/>
</dbReference>
<dbReference type="SUPFAM" id="SSF51735">
    <property type="entry name" value="NAD(P)-binding Rossmann-fold domains"/>
    <property type="match status" value="1"/>
</dbReference>
<gene>
    <name type="primary">FMP52</name>
    <name type="ordered locus">YER004W</name>
</gene>
<proteinExistence type="evidence at protein level"/>
<organism>
    <name type="scientific">Saccharomyces cerevisiae (strain ATCC 204508 / S288c)</name>
    <name type="common">Baker's yeast</name>
    <dbReference type="NCBI Taxonomy" id="559292"/>
    <lineage>
        <taxon>Eukaryota</taxon>
        <taxon>Fungi</taxon>
        <taxon>Dikarya</taxon>
        <taxon>Ascomycota</taxon>
        <taxon>Saccharomycotina</taxon>
        <taxon>Saccharomycetes</taxon>
        <taxon>Saccharomycetales</taxon>
        <taxon>Saccharomycetaceae</taxon>
        <taxon>Saccharomyces</taxon>
    </lineage>
</organism>
<evidence type="ECO:0000269" key="1">
    <source>
    </source>
</evidence>
<evidence type="ECO:0000269" key="2">
    <source>
    </source>
</evidence>
<evidence type="ECO:0000269" key="3">
    <source>
    </source>
</evidence>
<evidence type="ECO:0000305" key="4"/>
<name>FMP52_YEAST</name>
<feature type="transit peptide" description="Mitochondrion">
    <location>
        <begin position="1"/>
        <end position="44"/>
    </location>
</feature>
<feature type="chain" id="PRO_0000202620" description="Protein FMP52, mitochondrial">
    <location>
        <begin position="45"/>
        <end position="231"/>
    </location>
</feature>